<proteinExistence type="inferred from homology"/>
<accession>Q12FA8</accession>
<gene>
    <name evidence="1" type="primary">secA</name>
    <name type="ordered locus">Bpro_0828</name>
</gene>
<reference key="1">
    <citation type="journal article" date="2008" name="Appl. Environ. Microbiol.">
        <title>The genome of Polaromonas sp. strain JS666: insights into the evolution of a hydrocarbon- and xenobiotic-degrading bacterium, and features of relevance to biotechnology.</title>
        <authorList>
            <person name="Mattes T.E."/>
            <person name="Alexander A.K."/>
            <person name="Richardson P.M."/>
            <person name="Munk A.C."/>
            <person name="Han C.S."/>
            <person name="Stothard P."/>
            <person name="Coleman N.V."/>
        </authorList>
    </citation>
    <scope>NUCLEOTIDE SEQUENCE [LARGE SCALE GENOMIC DNA]</scope>
    <source>
        <strain>JS666 / ATCC BAA-500</strain>
    </source>
</reference>
<sequence>MASNILTQIFGSRNDRLLKTYRKIVDRINALETQYEQLGDDELRAKTQEFKNRVAAGEALDAILPEAFAVVREGSKRVMKMRHFDVQMLGGISLHNGKISEMRTGEGKTLTATLPVYLNALTGKGVHVVTVNDYLASRDARWMGKLYNFLGLTVGINLPNMSREEKQAAYNADITYGTNNEYGFDYLRDNMVYEVGDRVQRGLNYAIVDEVDSILIDEARTPLIISGQAEDHTEMYLAMNKVVPLLTRQEGEADPRTGEGVTKPGDFTIDEKTRQVFLTEQGHESAERILFNLGLIAESATLYDPANISLMHHLYAALRANLLYHRDQHYVVQDGEVVIVDEFTGRLMSGRRWSDGLHQAVEAKEGVQIQAENQTLASITFQNYFRLYGKLAGMTGTADTEAYEFQEIYGLETTVIPPNRVSRRDDQLDRVYKTTREKYEAAIKDIRECYERGQPVLVGTTSIENSEIIDQLLEKEKLPHQVLNAKQHAREADIVAQAGRLKVITIATNMAGRGTDIVLGGNLEKLIEAVEADESMDTAAKEAEIARLRARWSEEHEQVKALGGLRIIATERHESRRIDNQLRGRSGRQGDPGSSRFYLSLDDPLMRIFAGDRVKAIMERLKMPDGEAIEAGIVTRSIESAQRKVEARNFDIRKQLLEYDDVANDQRKVIYQQRNDIMDAGSLQAQIESLREGCFTDLTRQYVPAESVEEQWDIAGLEKVLLEEWQISLPLAGELESATAITDEDILEKVIAAANVAFADKVEKIGQENFTQFERLVLLQSIDTHWREHLSALDYLRQGIHLRGYAQKQPKQEYKREAFELFGQLLDSVKNEVTKVLMTVKIQSGEQLEQAAEEMENRAESISNVTYTAPTETGEAETRVDEDTLRRVSLASGIAVPRVGRNDPCPCGSGKKYKLCHGRLN</sequence>
<dbReference type="EC" id="7.4.2.8" evidence="1"/>
<dbReference type="EMBL" id="CP000316">
    <property type="protein sequence ID" value="ABE42784.1"/>
    <property type="molecule type" value="Genomic_DNA"/>
</dbReference>
<dbReference type="RefSeq" id="WP_011481786.1">
    <property type="nucleotide sequence ID" value="NC_007948.1"/>
</dbReference>
<dbReference type="SMR" id="Q12FA8"/>
<dbReference type="STRING" id="296591.Bpro_0828"/>
<dbReference type="KEGG" id="pol:Bpro_0828"/>
<dbReference type="eggNOG" id="COG0653">
    <property type="taxonomic scope" value="Bacteria"/>
</dbReference>
<dbReference type="HOGENOM" id="CLU_005314_3_0_4"/>
<dbReference type="OrthoDB" id="9805579at2"/>
<dbReference type="Proteomes" id="UP000001983">
    <property type="component" value="Chromosome"/>
</dbReference>
<dbReference type="GO" id="GO:0031522">
    <property type="term" value="C:cell envelope Sec protein transport complex"/>
    <property type="evidence" value="ECO:0007669"/>
    <property type="project" value="TreeGrafter"/>
</dbReference>
<dbReference type="GO" id="GO:0005829">
    <property type="term" value="C:cytosol"/>
    <property type="evidence" value="ECO:0007669"/>
    <property type="project" value="TreeGrafter"/>
</dbReference>
<dbReference type="GO" id="GO:0005886">
    <property type="term" value="C:plasma membrane"/>
    <property type="evidence" value="ECO:0007669"/>
    <property type="project" value="UniProtKB-SubCell"/>
</dbReference>
<dbReference type="GO" id="GO:0005524">
    <property type="term" value="F:ATP binding"/>
    <property type="evidence" value="ECO:0007669"/>
    <property type="project" value="UniProtKB-UniRule"/>
</dbReference>
<dbReference type="GO" id="GO:0046872">
    <property type="term" value="F:metal ion binding"/>
    <property type="evidence" value="ECO:0007669"/>
    <property type="project" value="UniProtKB-KW"/>
</dbReference>
<dbReference type="GO" id="GO:0008564">
    <property type="term" value="F:protein-exporting ATPase activity"/>
    <property type="evidence" value="ECO:0007669"/>
    <property type="project" value="UniProtKB-EC"/>
</dbReference>
<dbReference type="GO" id="GO:0065002">
    <property type="term" value="P:intracellular protein transmembrane transport"/>
    <property type="evidence" value="ECO:0007669"/>
    <property type="project" value="UniProtKB-UniRule"/>
</dbReference>
<dbReference type="GO" id="GO:0017038">
    <property type="term" value="P:protein import"/>
    <property type="evidence" value="ECO:0007669"/>
    <property type="project" value="InterPro"/>
</dbReference>
<dbReference type="GO" id="GO:0006605">
    <property type="term" value="P:protein targeting"/>
    <property type="evidence" value="ECO:0007669"/>
    <property type="project" value="UniProtKB-UniRule"/>
</dbReference>
<dbReference type="GO" id="GO:0043952">
    <property type="term" value="P:protein transport by the Sec complex"/>
    <property type="evidence" value="ECO:0007669"/>
    <property type="project" value="TreeGrafter"/>
</dbReference>
<dbReference type="CDD" id="cd17928">
    <property type="entry name" value="DEXDc_SecA"/>
    <property type="match status" value="1"/>
</dbReference>
<dbReference type="CDD" id="cd18803">
    <property type="entry name" value="SF2_C_secA"/>
    <property type="match status" value="1"/>
</dbReference>
<dbReference type="FunFam" id="3.40.50.300:FF:000081">
    <property type="entry name" value="Preprotein translocase subunit SecA"/>
    <property type="match status" value="1"/>
</dbReference>
<dbReference type="FunFam" id="3.40.50.300:FF:000113">
    <property type="entry name" value="Preprotein translocase subunit SecA"/>
    <property type="match status" value="1"/>
</dbReference>
<dbReference type="FunFam" id="3.90.1440.10:FF:000001">
    <property type="entry name" value="Preprotein translocase subunit SecA"/>
    <property type="match status" value="1"/>
</dbReference>
<dbReference type="FunFam" id="1.10.3060.10:FF:000003">
    <property type="entry name" value="Protein translocase subunit SecA"/>
    <property type="match status" value="1"/>
</dbReference>
<dbReference type="Gene3D" id="1.10.3060.10">
    <property type="entry name" value="Helical scaffold and wing domains of SecA"/>
    <property type="match status" value="1"/>
</dbReference>
<dbReference type="Gene3D" id="3.40.50.300">
    <property type="entry name" value="P-loop containing nucleotide triphosphate hydrolases"/>
    <property type="match status" value="2"/>
</dbReference>
<dbReference type="Gene3D" id="3.90.1440.10">
    <property type="entry name" value="SecA, preprotein cross-linking domain"/>
    <property type="match status" value="1"/>
</dbReference>
<dbReference type="HAMAP" id="MF_01382">
    <property type="entry name" value="SecA"/>
    <property type="match status" value="1"/>
</dbReference>
<dbReference type="InterPro" id="IPR014001">
    <property type="entry name" value="Helicase_ATP-bd"/>
</dbReference>
<dbReference type="InterPro" id="IPR001650">
    <property type="entry name" value="Helicase_C-like"/>
</dbReference>
<dbReference type="InterPro" id="IPR027417">
    <property type="entry name" value="P-loop_NTPase"/>
</dbReference>
<dbReference type="InterPro" id="IPR004027">
    <property type="entry name" value="SEC_C_motif"/>
</dbReference>
<dbReference type="InterPro" id="IPR000185">
    <property type="entry name" value="SecA"/>
</dbReference>
<dbReference type="InterPro" id="IPR020937">
    <property type="entry name" value="SecA_CS"/>
</dbReference>
<dbReference type="InterPro" id="IPR011115">
    <property type="entry name" value="SecA_DEAD"/>
</dbReference>
<dbReference type="InterPro" id="IPR014018">
    <property type="entry name" value="SecA_motor_DEAD"/>
</dbReference>
<dbReference type="InterPro" id="IPR011130">
    <property type="entry name" value="SecA_preprotein_X-link_dom"/>
</dbReference>
<dbReference type="InterPro" id="IPR044722">
    <property type="entry name" value="SecA_SF2_C"/>
</dbReference>
<dbReference type="InterPro" id="IPR011116">
    <property type="entry name" value="SecA_Wing/Scaffold"/>
</dbReference>
<dbReference type="InterPro" id="IPR036266">
    <property type="entry name" value="SecA_Wing/Scaffold_sf"/>
</dbReference>
<dbReference type="InterPro" id="IPR036670">
    <property type="entry name" value="SecA_X-link_sf"/>
</dbReference>
<dbReference type="NCBIfam" id="NF009538">
    <property type="entry name" value="PRK12904.1"/>
    <property type="match status" value="1"/>
</dbReference>
<dbReference type="NCBIfam" id="TIGR00963">
    <property type="entry name" value="secA"/>
    <property type="match status" value="1"/>
</dbReference>
<dbReference type="PANTHER" id="PTHR30612:SF0">
    <property type="entry name" value="CHLOROPLAST PROTEIN-TRANSPORTING ATPASE"/>
    <property type="match status" value="1"/>
</dbReference>
<dbReference type="PANTHER" id="PTHR30612">
    <property type="entry name" value="SECA INNER MEMBRANE COMPONENT OF SEC PROTEIN SECRETION SYSTEM"/>
    <property type="match status" value="1"/>
</dbReference>
<dbReference type="Pfam" id="PF21090">
    <property type="entry name" value="P-loop_SecA"/>
    <property type="match status" value="1"/>
</dbReference>
<dbReference type="Pfam" id="PF02810">
    <property type="entry name" value="SEC-C"/>
    <property type="match status" value="1"/>
</dbReference>
<dbReference type="Pfam" id="PF07517">
    <property type="entry name" value="SecA_DEAD"/>
    <property type="match status" value="1"/>
</dbReference>
<dbReference type="Pfam" id="PF01043">
    <property type="entry name" value="SecA_PP_bind"/>
    <property type="match status" value="1"/>
</dbReference>
<dbReference type="Pfam" id="PF07516">
    <property type="entry name" value="SecA_SW"/>
    <property type="match status" value="1"/>
</dbReference>
<dbReference type="PRINTS" id="PR00906">
    <property type="entry name" value="SECA"/>
</dbReference>
<dbReference type="SMART" id="SM00957">
    <property type="entry name" value="SecA_DEAD"/>
    <property type="match status" value="1"/>
</dbReference>
<dbReference type="SMART" id="SM00958">
    <property type="entry name" value="SecA_PP_bind"/>
    <property type="match status" value="1"/>
</dbReference>
<dbReference type="SUPFAM" id="SSF81886">
    <property type="entry name" value="Helical scaffold and wing domains of SecA"/>
    <property type="match status" value="1"/>
</dbReference>
<dbReference type="SUPFAM" id="SSF52540">
    <property type="entry name" value="P-loop containing nucleoside triphosphate hydrolases"/>
    <property type="match status" value="2"/>
</dbReference>
<dbReference type="SUPFAM" id="SSF81767">
    <property type="entry name" value="Pre-protein crosslinking domain of SecA"/>
    <property type="match status" value="1"/>
</dbReference>
<dbReference type="PROSITE" id="PS01312">
    <property type="entry name" value="SECA"/>
    <property type="match status" value="1"/>
</dbReference>
<dbReference type="PROSITE" id="PS51196">
    <property type="entry name" value="SECA_MOTOR_DEAD"/>
    <property type="match status" value="1"/>
</dbReference>
<feature type="chain" id="PRO_0000320889" description="Protein translocase subunit SecA">
    <location>
        <begin position="1"/>
        <end position="921"/>
    </location>
</feature>
<feature type="binding site" evidence="1">
    <location>
        <position position="87"/>
    </location>
    <ligand>
        <name>ATP</name>
        <dbReference type="ChEBI" id="CHEBI:30616"/>
    </ligand>
</feature>
<feature type="binding site" evidence="1">
    <location>
        <begin position="105"/>
        <end position="109"/>
    </location>
    <ligand>
        <name>ATP</name>
        <dbReference type="ChEBI" id="CHEBI:30616"/>
    </ligand>
</feature>
<feature type="binding site" evidence="1">
    <location>
        <position position="516"/>
    </location>
    <ligand>
        <name>ATP</name>
        <dbReference type="ChEBI" id="CHEBI:30616"/>
    </ligand>
</feature>
<feature type="binding site" evidence="1">
    <location>
        <position position="905"/>
    </location>
    <ligand>
        <name>Zn(2+)</name>
        <dbReference type="ChEBI" id="CHEBI:29105"/>
    </ligand>
</feature>
<feature type="binding site" evidence="1">
    <location>
        <position position="907"/>
    </location>
    <ligand>
        <name>Zn(2+)</name>
        <dbReference type="ChEBI" id="CHEBI:29105"/>
    </ligand>
</feature>
<feature type="binding site" evidence="1">
    <location>
        <position position="916"/>
    </location>
    <ligand>
        <name>Zn(2+)</name>
        <dbReference type="ChEBI" id="CHEBI:29105"/>
    </ligand>
</feature>
<feature type="binding site" evidence="1">
    <location>
        <position position="917"/>
    </location>
    <ligand>
        <name>Zn(2+)</name>
        <dbReference type="ChEBI" id="CHEBI:29105"/>
    </ligand>
</feature>
<organism>
    <name type="scientific">Polaromonas sp. (strain JS666 / ATCC BAA-500)</name>
    <dbReference type="NCBI Taxonomy" id="296591"/>
    <lineage>
        <taxon>Bacteria</taxon>
        <taxon>Pseudomonadati</taxon>
        <taxon>Pseudomonadota</taxon>
        <taxon>Betaproteobacteria</taxon>
        <taxon>Burkholderiales</taxon>
        <taxon>Comamonadaceae</taxon>
        <taxon>Polaromonas</taxon>
    </lineage>
</organism>
<evidence type="ECO:0000255" key="1">
    <source>
        <dbReference type="HAMAP-Rule" id="MF_01382"/>
    </source>
</evidence>
<protein>
    <recommendedName>
        <fullName evidence="1">Protein translocase subunit SecA</fullName>
        <ecNumber evidence="1">7.4.2.8</ecNumber>
    </recommendedName>
</protein>
<keyword id="KW-0067">ATP-binding</keyword>
<keyword id="KW-0997">Cell inner membrane</keyword>
<keyword id="KW-1003">Cell membrane</keyword>
<keyword id="KW-0963">Cytoplasm</keyword>
<keyword id="KW-0472">Membrane</keyword>
<keyword id="KW-0479">Metal-binding</keyword>
<keyword id="KW-0547">Nucleotide-binding</keyword>
<keyword id="KW-0653">Protein transport</keyword>
<keyword id="KW-1185">Reference proteome</keyword>
<keyword id="KW-1278">Translocase</keyword>
<keyword id="KW-0811">Translocation</keyword>
<keyword id="KW-0813">Transport</keyword>
<keyword id="KW-0862">Zinc</keyword>
<name>SECA_POLSJ</name>
<comment type="function">
    <text evidence="1">Part of the Sec protein translocase complex. Interacts with the SecYEG preprotein conducting channel. Has a central role in coupling the hydrolysis of ATP to the transfer of proteins into and across the cell membrane, serving both as a receptor for the preprotein-SecB complex and as an ATP-driven molecular motor driving the stepwise translocation of polypeptide chains across the membrane.</text>
</comment>
<comment type="catalytic activity">
    <reaction evidence="1">
        <text>ATP + H2O + cellular proteinSide 1 = ADP + phosphate + cellular proteinSide 2.</text>
        <dbReference type="EC" id="7.4.2.8"/>
    </reaction>
</comment>
<comment type="cofactor">
    <cofactor evidence="1">
        <name>Zn(2+)</name>
        <dbReference type="ChEBI" id="CHEBI:29105"/>
    </cofactor>
    <text evidence="1">May bind 1 zinc ion per subunit.</text>
</comment>
<comment type="subunit">
    <text evidence="1">Monomer and homodimer. Part of the essential Sec protein translocation apparatus which comprises SecA, SecYEG and auxiliary proteins SecDF-YajC and YidC.</text>
</comment>
<comment type="subcellular location">
    <subcellularLocation>
        <location evidence="1">Cell inner membrane</location>
        <topology evidence="1">Peripheral membrane protein</topology>
        <orientation evidence="1">Cytoplasmic side</orientation>
    </subcellularLocation>
    <subcellularLocation>
        <location evidence="1">Cytoplasm</location>
    </subcellularLocation>
    <text evidence="1">Distribution is 50-50.</text>
</comment>
<comment type="similarity">
    <text evidence="1">Belongs to the SecA family.</text>
</comment>